<organism>
    <name type="scientific">Pelobacter propionicus (strain DSM 2379 / NBRC 103807 / OttBd1)</name>
    <dbReference type="NCBI Taxonomy" id="338966"/>
    <lineage>
        <taxon>Bacteria</taxon>
        <taxon>Pseudomonadati</taxon>
        <taxon>Thermodesulfobacteriota</taxon>
        <taxon>Desulfuromonadia</taxon>
        <taxon>Desulfuromonadales</taxon>
        <taxon>Desulfuromonadaceae</taxon>
        <taxon>Pelobacter</taxon>
    </lineage>
</organism>
<reference key="1">
    <citation type="submission" date="2006-10" db="EMBL/GenBank/DDBJ databases">
        <title>Complete sequence of chromosome of Pelobacter propionicus DSM 2379.</title>
        <authorList>
            <consortium name="US DOE Joint Genome Institute"/>
            <person name="Copeland A."/>
            <person name="Lucas S."/>
            <person name="Lapidus A."/>
            <person name="Barry K."/>
            <person name="Detter J.C."/>
            <person name="Glavina del Rio T."/>
            <person name="Hammon N."/>
            <person name="Israni S."/>
            <person name="Dalin E."/>
            <person name="Tice H."/>
            <person name="Pitluck S."/>
            <person name="Saunders E."/>
            <person name="Brettin T."/>
            <person name="Bruce D."/>
            <person name="Han C."/>
            <person name="Tapia R."/>
            <person name="Schmutz J."/>
            <person name="Larimer F."/>
            <person name="Land M."/>
            <person name="Hauser L."/>
            <person name="Kyrpides N."/>
            <person name="Kim E."/>
            <person name="Lovley D."/>
            <person name="Richardson P."/>
        </authorList>
    </citation>
    <scope>NUCLEOTIDE SEQUENCE [LARGE SCALE GENOMIC DNA]</scope>
    <source>
        <strain>DSM 2379 / NBRC 103807 / OttBd1</strain>
    </source>
</reference>
<accession>A1AML8</accession>
<comment type="function">
    <text evidence="1">Required for maturation of 30S ribosomal subunits.</text>
</comment>
<comment type="subcellular location">
    <subcellularLocation>
        <location evidence="1">Cytoplasm</location>
    </subcellularLocation>
</comment>
<comment type="similarity">
    <text evidence="1">Belongs to the RimP family.</text>
</comment>
<proteinExistence type="inferred from homology"/>
<keyword id="KW-0963">Cytoplasm</keyword>
<keyword id="KW-1185">Reference proteome</keyword>
<keyword id="KW-0690">Ribosome biogenesis</keyword>
<sequence length="161" mass="18229">MALHRDDICDRIRTLALPVIDSMNLELVEVEYKRSGREAVLRLFIDKEGGVTLDDCADLSRELSTLLDVEDLIPCEYSLEVSSPGLDRPLKSEADYERFSGRLIKVRTYEPYQDDAGNRRKTFLGRLEGLKDGSVVMSLTEGQTASIPLERIAKAQLEFEF</sequence>
<feature type="chain" id="PRO_0000384727" description="Ribosome maturation factor RimP">
    <location>
        <begin position="1"/>
        <end position="161"/>
    </location>
</feature>
<name>RIMP_PELPD</name>
<protein>
    <recommendedName>
        <fullName evidence="1">Ribosome maturation factor RimP</fullName>
    </recommendedName>
</protein>
<evidence type="ECO:0000255" key="1">
    <source>
        <dbReference type="HAMAP-Rule" id="MF_01077"/>
    </source>
</evidence>
<dbReference type="EMBL" id="CP000482">
    <property type="protein sequence ID" value="ABK98588.1"/>
    <property type="molecule type" value="Genomic_DNA"/>
</dbReference>
<dbReference type="RefSeq" id="WP_011734895.1">
    <property type="nucleotide sequence ID" value="NC_008609.1"/>
</dbReference>
<dbReference type="SMR" id="A1AML8"/>
<dbReference type="STRING" id="338966.Ppro_0960"/>
<dbReference type="KEGG" id="ppd:Ppro_0960"/>
<dbReference type="eggNOG" id="COG0779">
    <property type="taxonomic scope" value="Bacteria"/>
</dbReference>
<dbReference type="HOGENOM" id="CLU_070525_2_2_7"/>
<dbReference type="OrthoDB" id="9805006at2"/>
<dbReference type="Proteomes" id="UP000006732">
    <property type="component" value="Chromosome"/>
</dbReference>
<dbReference type="GO" id="GO:0005829">
    <property type="term" value="C:cytosol"/>
    <property type="evidence" value="ECO:0007669"/>
    <property type="project" value="TreeGrafter"/>
</dbReference>
<dbReference type="GO" id="GO:0000028">
    <property type="term" value="P:ribosomal small subunit assembly"/>
    <property type="evidence" value="ECO:0007669"/>
    <property type="project" value="TreeGrafter"/>
</dbReference>
<dbReference type="GO" id="GO:0006412">
    <property type="term" value="P:translation"/>
    <property type="evidence" value="ECO:0007669"/>
    <property type="project" value="TreeGrafter"/>
</dbReference>
<dbReference type="CDD" id="cd01734">
    <property type="entry name" value="YlxS_C"/>
    <property type="match status" value="1"/>
</dbReference>
<dbReference type="FunFam" id="3.30.300.70:FF:000001">
    <property type="entry name" value="Ribosome maturation factor RimP"/>
    <property type="match status" value="1"/>
</dbReference>
<dbReference type="Gene3D" id="2.30.30.180">
    <property type="entry name" value="Ribosome maturation factor RimP, C-terminal domain"/>
    <property type="match status" value="1"/>
</dbReference>
<dbReference type="Gene3D" id="3.30.300.70">
    <property type="entry name" value="RimP-like superfamily, N-terminal"/>
    <property type="match status" value="1"/>
</dbReference>
<dbReference type="HAMAP" id="MF_01077">
    <property type="entry name" value="RimP"/>
    <property type="match status" value="1"/>
</dbReference>
<dbReference type="InterPro" id="IPR003728">
    <property type="entry name" value="Ribosome_maturation_RimP"/>
</dbReference>
<dbReference type="InterPro" id="IPR028998">
    <property type="entry name" value="RimP_C"/>
</dbReference>
<dbReference type="InterPro" id="IPR036847">
    <property type="entry name" value="RimP_C_sf"/>
</dbReference>
<dbReference type="InterPro" id="IPR028989">
    <property type="entry name" value="RimP_N"/>
</dbReference>
<dbReference type="InterPro" id="IPR035956">
    <property type="entry name" value="RimP_N_sf"/>
</dbReference>
<dbReference type="NCBIfam" id="NF011241">
    <property type="entry name" value="PRK14647.1"/>
    <property type="match status" value="1"/>
</dbReference>
<dbReference type="PANTHER" id="PTHR33867">
    <property type="entry name" value="RIBOSOME MATURATION FACTOR RIMP"/>
    <property type="match status" value="1"/>
</dbReference>
<dbReference type="PANTHER" id="PTHR33867:SF1">
    <property type="entry name" value="RIBOSOME MATURATION FACTOR RIMP"/>
    <property type="match status" value="1"/>
</dbReference>
<dbReference type="Pfam" id="PF17384">
    <property type="entry name" value="DUF150_C"/>
    <property type="match status" value="1"/>
</dbReference>
<dbReference type="Pfam" id="PF02576">
    <property type="entry name" value="RimP_N"/>
    <property type="match status" value="1"/>
</dbReference>
<dbReference type="SUPFAM" id="SSF74942">
    <property type="entry name" value="YhbC-like, C-terminal domain"/>
    <property type="match status" value="1"/>
</dbReference>
<dbReference type="SUPFAM" id="SSF75420">
    <property type="entry name" value="YhbC-like, N-terminal domain"/>
    <property type="match status" value="1"/>
</dbReference>
<gene>
    <name evidence="1" type="primary">rimP</name>
    <name type="ordered locus">Ppro_0960</name>
</gene>